<reference key="1">
    <citation type="journal article" date="2003" name="Proc. Natl. Acad. Sci. U.S.A.">
        <title>Genome sequence of the cyanobacterium Prochlorococcus marinus SS120, a nearly minimal oxyphototrophic genome.</title>
        <authorList>
            <person name="Dufresne A."/>
            <person name="Salanoubat M."/>
            <person name="Partensky F."/>
            <person name="Artiguenave F."/>
            <person name="Axmann I.M."/>
            <person name="Barbe V."/>
            <person name="Duprat S."/>
            <person name="Galperin M.Y."/>
            <person name="Koonin E.V."/>
            <person name="Le Gall F."/>
            <person name="Makarova K.S."/>
            <person name="Ostrowski M."/>
            <person name="Oztas S."/>
            <person name="Robert C."/>
            <person name="Rogozin I.B."/>
            <person name="Scanlan D.J."/>
            <person name="Tandeau de Marsac N."/>
            <person name="Weissenbach J."/>
            <person name="Wincker P."/>
            <person name="Wolf Y.I."/>
            <person name="Hess W.R."/>
        </authorList>
    </citation>
    <scope>NUCLEOTIDE SEQUENCE [LARGE SCALE GENOMIC DNA]</scope>
    <source>
        <strain>SARG / CCMP1375 / SS120</strain>
    </source>
</reference>
<feature type="chain" id="PRO_0000125710" description="Large ribosomal subunit protein uL1">
    <location>
        <begin position="1"/>
        <end position="234"/>
    </location>
</feature>
<sequence>MTKISKRMKSLSAKVEDKSYAPLEAIQLVKENANAKFDETIEAHIRLGIDPKYTDQQIRTTVSLPKGTGQKVRIAVIAKGEKVAEANSAGADLAGEEELIDSISKGEMNFDLLISTPDMMPKVAKLGRVLGPRGLMPNPKAGTVTTDLISSIKEFKAGKLEFRADRAGIVHVRFGKASFSPEDLLENLKVLHEAIDRNKPSGAKGRYWKSLYITSTMGPSVEIDIAALQDSKEE</sequence>
<accession>Q7VDY6</accession>
<dbReference type="EMBL" id="AE017126">
    <property type="protein sequence ID" value="AAP99275.1"/>
    <property type="molecule type" value="Genomic_DNA"/>
</dbReference>
<dbReference type="RefSeq" id="NP_874623.1">
    <property type="nucleotide sequence ID" value="NC_005042.1"/>
</dbReference>
<dbReference type="RefSeq" id="WP_011124384.1">
    <property type="nucleotide sequence ID" value="NC_005042.1"/>
</dbReference>
<dbReference type="SMR" id="Q7VDY6"/>
<dbReference type="STRING" id="167539.Pro_0229"/>
<dbReference type="EnsemblBacteria" id="AAP99275">
    <property type="protein sequence ID" value="AAP99275"/>
    <property type="gene ID" value="Pro_0229"/>
</dbReference>
<dbReference type="KEGG" id="pma:Pro_0229"/>
<dbReference type="PATRIC" id="fig|167539.5.peg.236"/>
<dbReference type="eggNOG" id="COG0081">
    <property type="taxonomic scope" value="Bacteria"/>
</dbReference>
<dbReference type="HOGENOM" id="CLU_062853_0_0_3"/>
<dbReference type="OrthoDB" id="9803740at2"/>
<dbReference type="Proteomes" id="UP000001420">
    <property type="component" value="Chromosome"/>
</dbReference>
<dbReference type="GO" id="GO:0015934">
    <property type="term" value="C:large ribosomal subunit"/>
    <property type="evidence" value="ECO:0007669"/>
    <property type="project" value="InterPro"/>
</dbReference>
<dbReference type="GO" id="GO:0019843">
    <property type="term" value="F:rRNA binding"/>
    <property type="evidence" value="ECO:0007669"/>
    <property type="project" value="UniProtKB-UniRule"/>
</dbReference>
<dbReference type="GO" id="GO:0003735">
    <property type="term" value="F:structural constituent of ribosome"/>
    <property type="evidence" value="ECO:0007669"/>
    <property type="project" value="InterPro"/>
</dbReference>
<dbReference type="GO" id="GO:0000049">
    <property type="term" value="F:tRNA binding"/>
    <property type="evidence" value="ECO:0007669"/>
    <property type="project" value="UniProtKB-KW"/>
</dbReference>
<dbReference type="GO" id="GO:0006417">
    <property type="term" value="P:regulation of translation"/>
    <property type="evidence" value="ECO:0007669"/>
    <property type="project" value="UniProtKB-KW"/>
</dbReference>
<dbReference type="GO" id="GO:0006412">
    <property type="term" value="P:translation"/>
    <property type="evidence" value="ECO:0007669"/>
    <property type="project" value="UniProtKB-UniRule"/>
</dbReference>
<dbReference type="CDD" id="cd00403">
    <property type="entry name" value="Ribosomal_L1"/>
    <property type="match status" value="1"/>
</dbReference>
<dbReference type="FunFam" id="3.40.50.790:FF:000001">
    <property type="entry name" value="50S ribosomal protein L1"/>
    <property type="match status" value="1"/>
</dbReference>
<dbReference type="Gene3D" id="3.30.190.20">
    <property type="match status" value="1"/>
</dbReference>
<dbReference type="Gene3D" id="3.40.50.790">
    <property type="match status" value="1"/>
</dbReference>
<dbReference type="HAMAP" id="MF_01318_B">
    <property type="entry name" value="Ribosomal_uL1_B"/>
    <property type="match status" value="1"/>
</dbReference>
<dbReference type="InterPro" id="IPR005878">
    <property type="entry name" value="Ribosom_uL1_bac-type"/>
</dbReference>
<dbReference type="InterPro" id="IPR002143">
    <property type="entry name" value="Ribosomal_uL1"/>
</dbReference>
<dbReference type="InterPro" id="IPR023674">
    <property type="entry name" value="Ribosomal_uL1-like"/>
</dbReference>
<dbReference type="InterPro" id="IPR028364">
    <property type="entry name" value="Ribosomal_uL1/biogenesis"/>
</dbReference>
<dbReference type="InterPro" id="IPR016095">
    <property type="entry name" value="Ribosomal_uL1_3-a/b-sand"/>
</dbReference>
<dbReference type="InterPro" id="IPR023673">
    <property type="entry name" value="Ribosomal_uL1_CS"/>
</dbReference>
<dbReference type="NCBIfam" id="TIGR01169">
    <property type="entry name" value="rplA_bact"/>
    <property type="match status" value="1"/>
</dbReference>
<dbReference type="PANTHER" id="PTHR36427">
    <property type="entry name" value="54S RIBOSOMAL PROTEIN L1, MITOCHONDRIAL"/>
    <property type="match status" value="1"/>
</dbReference>
<dbReference type="PANTHER" id="PTHR36427:SF3">
    <property type="entry name" value="LARGE RIBOSOMAL SUBUNIT PROTEIN UL1M"/>
    <property type="match status" value="1"/>
</dbReference>
<dbReference type="Pfam" id="PF00687">
    <property type="entry name" value="Ribosomal_L1"/>
    <property type="match status" value="1"/>
</dbReference>
<dbReference type="PIRSF" id="PIRSF002155">
    <property type="entry name" value="Ribosomal_L1"/>
    <property type="match status" value="1"/>
</dbReference>
<dbReference type="SUPFAM" id="SSF56808">
    <property type="entry name" value="Ribosomal protein L1"/>
    <property type="match status" value="1"/>
</dbReference>
<dbReference type="PROSITE" id="PS01199">
    <property type="entry name" value="RIBOSOMAL_L1"/>
    <property type="match status" value="1"/>
</dbReference>
<comment type="function">
    <text evidence="1">Binds directly to 23S rRNA. The L1 stalk is quite mobile in the ribosome, and is involved in E site tRNA release.</text>
</comment>
<comment type="function">
    <text evidence="1">Protein L1 is also a translational repressor protein, it controls the translation of the L11 operon by binding to its mRNA.</text>
</comment>
<comment type="subunit">
    <text evidence="1">Part of the 50S ribosomal subunit.</text>
</comment>
<comment type="similarity">
    <text evidence="1">Belongs to the universal ribosomal protein uL1 family.</text>
</comment>
<keyword id="KW-1185">Reference proteome</keyword>
<keyword id="KW-0678">Repressor</keyword>
<keyword id="KW-0687">Ribonucleoprotein</keyword>
<keyword id="KW-0689">Ribosomal protein</keyword>
<keyword id="KW-0694">RNA-binding</keyword>
<keyword id="KW-0699">rRNA-binding</keyword>
<keyword id="KW-0810">Translation regulation</keyword>
<keyword id="KW-0820">tRNA-binding</keyword>
<proteinExistence type="inferred from homology"/>
<evidence type="ECO:0000255" key="1">
    <source>
        <dbReference type="HAMAP-Rule" id="MF_01318"/>
    </source>
</evidence>
<evidence type="ECO:0000305" key="2"/>
<protein>
    <recommendedName>
        <fullName evidence="1">Large ribosomal subunit protein uL1</fullName>
    </recommendedName>
    <alternativeName>
        <fullName evidence="2">50S ribosomal protein L1</fullName>
    </alternativeName>
</protein>
<name>RL1_PROMA</name>
<gene>
    <name evidence="1" type="primary">rplA</name>
    <name evidence="1" type="synonym">rpl1</name>
    <name type="ordered locus">Pro_0229</name>
</gene>
<organism>
    <name type="scientific">Prochlorococcus marinus (strain SARG / CCMP1375 / SS120)</name>
    <dbReference type="NCBI Taxonomy" id="167539"/>
    <lineage>
        <taxon>Bacteria</taxon>
        <taxon>Bacillati</taxon>
        <taxon>Cyanobacteriota</taxon>
        <taxon>Cyanophyceae</taxon>
        <taxon>Synechococcales</taxon>
        <taxon>Prochlorococcaceae</taxon>
        <taxon>Prochlorococcus</taxon>
    </lineage>
</organism>